<organism>
    <name type="scientific">Pseudomonas paraeruginosa (strain DSM 24068 / PA7)</name>
    <name type="common">Pseudomonas aeruginosa (strain PA7)</name>
    <dbReference type="NCBI Taxonomy" id="381754"/>
    <lineage>
        <taxon>Bacteria</taxon>
        <taxon>Pseudomonadati</taxon>
        <taxon>Pseudomonadota</taxon>
        <taxon>Gammaproteobacteria</taxon>
        <taxon>Pseudomonadales</taxon>
        <taxon>Pseudomonadaceae</taxon>
        <taxon>Pseudomonas</taxon>
        <taxon>Pseudomonas paraeruginosa</taxon>
    </lineage>
</organism>
<comment type="catalytic activity">
    <reaction evidence="1">
        <text>tRNA(His) + L-histidine + ATP = L-histidyl-tRNA(His) + AMP + diphosphate + H(+)</text>
        <dbReference type="Rhea" id="RHEA:17313"/>
        <dbReference type="Rhea" id="RHEA-COMP:9665"/>
        <dbReference type="Rhea" id="RHEA-COMP:9689"/>
        <dbReference type="ChEBI" id="CHEBI:15378"/>
        <dbReference type="ChEBI" id="CHEBI:30616"/>
        <dbReference type="ChEBI" id="CHEBI:33019"/>
        <dbReference type="ChEBI" id="CHEBI:57595"/>
        <dbReference type="ChEBI" id="CHEBI:78442"/>
        <dbReference type="ChEBI" id="CHEBI:78527"/>
        <dbReference type="ChEBI" id="CHEBI:456215"/>
        <dbReference type="EC" id="6.1.1.21"/>
    </reaction>
</comment>
<comment type="subunit">
    <text evidence="1">Homodimer.</text>
</comment>
<comment type="subcellular location">
    <subcellularLocation>
        <location evidence="1">Cytoplasm</location>
    </subcellularLocation>
</comment>
<comment type="similarity">
    <text evidence="1">Belongs to the class-II aminoacyl-tRNA synthetase family.</text>
</comment>
<gene>
    <name evidence="1" type="primary">hisS</name>
    <name type="ordered locus">PSPA7_1312</name>
</gene>
<evidence type="ECO:0000255" key="1">
    <source>
        <dbReference type="HAMAP-Rule" id="MF_00127"/>
    </source>
</evidence>
<keyword id="KW-0030">Aminoacyl-tRNA synthetase</keyword>
<keyword id="KW-0067">ATP-binding</keyword>
<keyword id="KW-0963">Cytoplasm</keyword>
<keyword id="KW-0436">Ligase</keyword>
<keyword id="KW-0547">Nucleotide-binding</keyword>
<keyword id="KW-0648">Protein biosynthesis</keyword>
<reference key="1">
    <citation type="submission" date="2007-06" db="EMBL/GenBank/DDBJ databases">
        <authorList>
            <person name="Dodson R.J."/>
            <person name="Harkins D."/>
            <person name="Paulsen I.T."/>
        </authorList>
    </citation>
    <scope>NUCLEOTIDE SEQUENCE [LARGE SCALE GENOMIC DNA]</scope>
    <source>
        <strain>DSM 24068 / PA7</strain>
    </source>
</reference>
<sequence>MSKSLQAIRGMNDILPEQTPAWRYLERTFAGLLDGYGYSEIRLPILEFTELFARGIGEGTDVVDKEMYTFLDRNGESLTMRPEGTAGCVRAVLEHGLSGGGQVQKLWYTGPMFRYEKPQKGRYRQFHQIGVEVFNLPGPDIDAELIILTWRLWQKLGMADAVTLQLNTLGSSEARARYREALVAYLQERFEQLDEDSQRRMTTNPLRILDSKVESTQALLVGAPTLHDYLDEESIAHFEGLKARLDAVGLRYEINQKLVRGLDYYCRTAFEWVTDKLGAQGTVCGGGRYDGLVSQFGGKPTPGVGFAMGVERLVLLLETLDVIPAELNRPADLYVCAFGEPAELAALALAEQLRSSIPGIRLLVNAGAGSFKSQFKKADKSGARYALILGEDEVANRVVGFKPLRDEGEQQSIAWDALPEHLAACLAQA</sequence>
<proteinExistence type="inferred from homology"/>
<protein>
    <recommendedName>
        <fullName evidence="1">Histidine--tRNA ligase</fullName>
        <ecNumber evidence="1">6.1.1.21</ecNumber>
    </recommendedName>
    <alternativeName>
        <fullName evidence="1">Histidyl-tRNA synthetase</fullName>
        <shortName evidence="1">HisRS</shortName>
    </alternativeName>
</protein>
<name>SYH_PSEP7</name>
<dbReference type="EC" id="6.1.1.21" evidence="1"/>
<dbReference type="EMBL" id="CP000744">
    <property type="protein sequence ID" value="ABR84990.1"/>
    <property type="molecule type" value="Genomic_DNA"/>
</dbReference>
<dbReference type="RefSeq" id="WP_003157148.1">
    <property type="nucleotide sequence ID" value="NC_009656.1"/>
</dbReference>
<dbReference type="SMR" id="A6V0W1"/>
<dbReference type="KEGG" id="pap:PSPA7_1312"/>
<dbReference type="HOGENOM" id="CLU_025113_1_1_6"/>
<dbReference type="Proteomes" id="UP000001582">
    <property type="component" value="Chromosome"/>
</dbReference>
<dbReference type="GO" id="GO:0005737">
    <property type="term" value="C:cytoplasm"/>
    <property type="evidence" value="ECO:0007669"/>
    <property type="project" value="UniProtKB-SubCell"/>
</dbReference>
<dbReference type="GO" id="GO:0005524">
    <property type="term" value="F:ATP binding"/>
    <property type="evidence" value="ECO:0007669"/>
    <property type="project" value="UniProtKB-UniRule"/>
</dbReference>
<dbReference type="GO" id="GO:0004821">
    <property type="term" value="F:histidine-tRNA ligase activity"/>
    <property type="evidence" value="ECO:0007669"/>
    <property type="project" value="UniProtKB-UniRule"/>
</dbReference>
<dbReference type="GO" id="GO:0006427">
    <property type="term" value="P:histidyl-tRNA aminoacylation"/>
    <property type="evidence" value="ECO:0007669"/>
    <property type="project" value="UniProtKB-UniRule"/>
</dbReference>
<dbReference type="CDD" id="cd00773">
    <property type="entry name" value="HisRS-like_core"/>
    <property type="match status" value="1"/>
</dbReference>
<dbReference type="CDD" id="cd00859">
    <property type="entry name" value="HisRS_anticodon"/>
    <property type="match status" value="1"/>
</dbReference>
<dbReference type="FunFam" id="3.30.930.10:FF:000005">
    <property type="entry name" value="Histidine--tRNA ligase"/>
    <property type="match status" value="1"/>
</dbReference>
<dbReference type="Gene3D" id="3.40.50.800">
    <property type="entry name" value="Anticodon-binding domain"/>
    <property type="match status" value="1"/>
</dbReference>
<dbReference type="Gene3D" id="3.30.930.10">
    <property type="entry name" value="Bira Bifunctional Protein, Domain 2"/>
    <property type="match status" value="1"/>
</dbReference>
<dbReference type="HAMAP" id="MF_00127">
    <property type="entry name" value="His_tRNA_synth"/>
    <property type="match status" value="1"/>
</dbReference>
<dbReference type="InterPro" id="IPR006195">
    <property type="entry name" value="aa-tRNA-synth_II"/>
</dbReference>
<dbReference type="InterPro" id="IPR045864">
    <property type="entry name" value="aa-tRNA-synth_II/BPL/LPL"/>
</dbReference>
<dbReference type="InterPro" id="IPR004154">
    <property type="entry name" value="Anticodon-bd"/>
</dbReference>
<dbReference type="InterPro" id="IPR036621">
    <property type="entry name" value="Anticodon-bd_dom_sf"/>
</dbReference>
<dbReference type="InterPro" id="IPR015807">
    <property type="entry name" value="His-tRNA-ligase"/>
</dbReference>
<dbReference type="InterPro" id="IPR041715">
    <property type="entry name" value="HisRS-like_core"/>
</dbReference>
<dbReference type="InterPro" id="IPR004516">
    <property type="entry name" value="HisRS/HisZ"/>
</dbReference>
<dbReference type="InterPro" id="IPR033656">
    <property type="entry name" value="HisRS_anticodon"/>
</dbReference>
<dbReference type="NCBIfam" id="TIGR00442">
    <property type="entry name" value="hisS"/>
    <property type="match status" value="1"/>
</dbReference>
<dbReference type="PANTHER" id="PTHR43707:SF1">
    <property type="entry name" value="HISTIDINE--TRNA LIGASE, MITOCHONDRIAL-RELATED"/>
    <property type="match status" value="1"/>
</dbReference>
<dbReference type="PANTHER" id="PTHR43707">
    <property type="entry name" value="HISTIDYL-TRNA SYNTHETASE"/>
    <property type="match status" value="1"/>
</dbReference>
<dbReference type="Pfam" id="PF03129">
    <property type="entry name" value="HGTP_anticodon"/>
    <property type="match status" value="1"/>
</dbReference>
<dbReference type="Pfam" id="PF13393">
    <property type="entry name" value="tRNA-synt_His"/>
    <property type="match status" value="1"/>
</dbReference>
<dbReference type="PIRSF" id="PIRSF001549">
    <property type="entry name" value="His-tRNA_synth"/>
    <property type="match status" value="1"/>
</dbReference>
<dbReference type="SUPFAM" id="SSF52954">
    <property type="entry name" value="Class II aaRS ABD-related"/>
    <property type="match status" value="1"/>
</dbReference>
<dbReference type="SUPFAM" id="SSF55681">
    <property type="entry name" value="Class II aaRS and biotin synthetases"/>
    <property type="match status" value="1"/>
</dbReference>
<dbReference type="PROSITE" id="PS50862">
    <property type="entry name" value="AA_TRNA_LIGASE_II"/>
    <property type="match status" value="1"/>
</dbReference>
<accession>A6V0W1</accession>
<feature type="chain" id="PRO_1000016417" description="Histidine--tRNA ligase">
    <location>
        <begin position="1"/>
        <end position="429"/>
    </location>
</feature>